<accession>Q2FIA6</accession>
<feature type="chain" id="PRO_1000068722" description="UPF0344 protein SAUSA300_0872">
    <location>
        <begin position="1"/>
        <end position="129"/>
    </location>
</feature>
<feature type="transmembrane region" description="Helical" evidence="1">
    <location>
        <begin position="1"/>
        <end position="21"/>
    </location>
</feature>
<feature type="transmembrane region" description="Helical" evidence="1">
    <location>
        <begin position="36"/>
        <end position="56"/>
    </location>
</feature>
<feature type="transmembrane region" description="Helical" evidence="1">
    <location>
        <begin position="67"/>
        <end position="87"/>
    </location>
</feature>
<feature type="transmembrane region" description="Helical" evidence="1">
    <location>
        <begin position="99"/>
        <end position="119"/>
    </location>
</feature>
<organism>
    <name type="scientific">Staphylococcus aureus (strain USA300)</name>
    <dbReference type="NCBI Taxonomy" id="367830"/>
    <lineage>
        <taxon>Bacteria</taxon>
        <taxon>Bacillati</taxon>
        <taxon>Bacillota</taxon>
        <taxon>Bacilli</taxon>
        <taxon>Bacillales</taxon>
        <taxon>Staphylococcaceae</taxon>
        <taxon>Staphylococcus</taxon>
    </lineage>
</organism>
<evidence type="ECO:0000255" key="1">
    <source>
        <dbReference type="HAMAP-Rule" id="MF_01536"/>
    </source>
</evidence>
<gene>
    <name type="ordered locus">SAUSA300_0872</name>
</gene>
<name>Y872_STAA3</name>
<comment type="subcellular location">
    <subcellularLocation>
        <location evidence="1">Cell membrane</location>
        <topology evidence="1">Multi-pass membrane protein</topology>
    </subcellularLocation>
</comment>
<comment type="similarity">
    <text evidence="1">Belongs to the UPF0344 family.</text>
</comment>
<keyword id="KW-1003">Cell membrane</keyword>
<keyword id="KW-0472">Membrane</keyword>
<keyword id="KW-0812">Transmembrane</keyword>
<keyword id="KW-1133">Transmembrane helix</keyword>
<dbReference type="EMBL" id="CP000255">
    <property type="protein sequence ID" value="ABD22107.1"/>
    <property type="molecule type" value="Genomic_DNA"/>
</dbReference>
<dbReference type="RefSeq" id="WP_000902817.1">
    <property type="nucleotide sequence ID" value="NZ_CP027476.1"/>
</dbReference>
<dbReference type="SMR" id="Q2FIA6"/>
<dbReference type="KEGG" id="saa:SAUSA300_0872"/>
<dbReference type="HOGENOM" id="CLU_146641_2_0_9"/>
<dbReference type="OMA" id="HMHIASW"/>
<dbReference type="Proteomes" id="UP000001939">
    <property type="component" value="Chromosome"/>
</dbReference>
<dbReference type="GO" id="GO:0005886">
    <property type="term" value="C:plasma membrane"/>
    <property type="evidence" value="ECO:0007669"/>
    <property type="project" value="UniProtKB-SubCell"/>
</dbReference>
<dbReference type="HAMAP" id="MF_01536">
    <property type="entry name" value="UPF0344"/>
    <property type="match status" value="1"/>
</dbReference>
<dbReference type="InterPro" id="IPR010899">
    <property type="entry name" value="UPF0344"/>
</dbReference>
<dbReference type="NCBIfam" id="NF010195">
    <property type="entry name" value="PRK13673.1-2"/>
    <property type="match status" value="1"/>
</dbReference>
<dbReference type="NCBIfam" id="NF010199">
    <property type="entry name" value="PRK13673.1-6"/>
    <property type="match status" value="1"/>
</dbReference>
<dbReference type="Pfam" id="PF07457">
    <property type="entry name" value="DUF1516"/>
    <property type="match status" value="1"/>
</dbReference>
<sequence length="129" mass="14539">MLHLHILSWVLAIILFIATYLNISKNQGRSPFFKPLHMILRLFMLLTLISGFWILIQSFMNGGANHMLLTLKMLCGVAVVGLMEVSIAKRKRHEQSHTMFWITIALIIITMVLGVILPLGPISKLFGIG</sequence>
<protein>
    <recommendedName>
        <fullName evidence="1">UPF0344 protein SAUSA300_0872</fullName>
    </recommendedName>
</protein>
<reference key="1">
    <citation type="journal article" date="2006" name="Lancet">
        <title>Complete genome sequence of USA300, an epidemic clone of community-acquired meticillin-resistant Staphylococcus aureus.</title>
        <authorList>
            <person name="Diep B.A."/>
            <person name="Gill S.R."/>
            <person name="Chang R.F."/>
            <person name="Phan T.H."/>
            <person name="Chen J.H."/>
            <person name="Davidson M.G."/>
            <person name="Lin F."/>
            <person name="Lin J."/>
            <person name="Carleton H.A."/>
            <person name="Mongodin E.F."/>
            <person name="Sensabaugh G.F."/>
            <person name="Perdreau-Remington F."/>
        </authorList>
    </citation>
    <scope>NUCLEOTIDE SEQUENCE [LARGE SCALE GENOMIC DNA]</scope>
    <source>
        <strain>USA300</strain>
    </source>
</reference>
<proteinExistence type="inferred from homology"/>